<protein>
    <recommendedName>
        <fullName evidence="5 7">Riparin-1.6</fullName>
    </recommendedName>
</protein>
<reference evidence="6 7" key="1">
    <citation type="journal article" date="2008" name="Regul. Pept.">
        <title>Disulfide-containing peptides from the glandular skin secretions of froglets of the genus Crinia: structure, activity and evolutionary trends.</title>
        <authorList>
            <person name="Jackway R.J."/>
            <person name="Pukala T.L."/>
            <person name="Maselli V.M."/>
            <person name="Musgrave I.F."/>
            <person name="Bowie J.H."/>
            <person name="Liu Y."/>
            <person name="Surinya-Johnson K.H."/>
            <person name="Donnellan S.C."/>
            <person name="Doyle J.R."/>
            <person name="Llewellyn L.E."/>
            <person name="Tyler M.J."/>
        </authorList>
    </citation>
    <scope>NUCLEOTIDE SEQUENCE [MRNA]</scope>
    <scope>TISSUE SPECIFICITY</scope>
    <scope>DISCUSSION OF SEQUENCE</scope>
    <source>
        <tissue evidence="7">Skin</tissue>
    </source>
</reference>
<organism>
    <name type="scientific">Crinia riparia</name>
    <name type="common">Streambank froglet</name>
    <name type="synonym">Flinders Ranges froglet</name>
    <dbReference type="NCBI Taxonomy" id="446489"/>
    <lineage>
        <taxon>Eukaryota</taxon>
        <taxon>Metazoa</taxon>
        <taxon>Chordata</taxon>
        <taxon>Craniata</taxon>
        <taxon>Vertebrata</taxon>
        <taxon>Euteleostomi</taxon>
        <taxon>Amphibia</taxon>
        <taxon>Batrachia</taxon>
        <taxon>Anura</taxon>
        <taxon>Neobatrachia</taxon>
        <taxon>Myobatrachoidea</taxon>
        <taxon>Myobatrachidae</taxon>
        <taxon>Myobatrachinae</taxon>
        <taxon>Crinia</taxon>
    </lineage>
</organism>
<sequence length="68" mass="7391">MKIIVFLAVLMLVSAQVCLVSAAEMEHSSDNELSSRDLVKRFPLPSCVYTRTCGKRDIESSEGANGGE</sequence>
<name>RIP16_CRIRI</name>
<comment type="subcellular location">
    <subcellularLocation>
        <location evidence="1">Secreted</location>
    </subcellularLocation>
</comment>
<comment type="tissue specificity">
    <text evidence="4">Expressed by the skin glands.</text>
</comment>
<dbReference type="EMBL" id="EF550517">
    <property type="protein sequence ID" value="ABQ88313.1"/>
    <property type="molecule type" value="mRNA"/>
</dbReference>
<dbReference type="SMR" id="A6MWS8"/>
<dbReference type="GO" id="GO:0005576">
    <property type="term" value="C:extracellular region"/>
    <property type="evidence" value="ECO:0000250"/>
    <property type="project" value="UniProtKB"/>
</dbReference>
<dbReference type="GO" id="GO:0006952">
    <property type="term" value="P:defense response"/>
    <property type="evidence" value="ECO:0007669"/>
    <property type="project" value="UniProtKB-KW"/>
</dbReference>
<accession>A6MWS8</accession>
<feature type="signal peptide" evidence="3 5">
    <location>
        <begin position="1"/>
        <end position="15"/>
    </location>
</feature>
<feature type="propeptide" id="PRO_0000371734" evidence="4">
    <location>
        <begin position="16"/>
        <end position="41"/>
    </location>
</feature>
<feature type="peptide" id="PRO_5000254169" description="Riparin-1.6">
    <location>
        <begin position="42"/>
        <end position="53"/>
    </location>
</feature>
<feature type="propeptide" id="PRO_0000371735" evidence="2">
    <location>
        <begin position="57"/>
        <end position="68"/>
    </location>
</feature>
<feature type="modified residue" description="Cysteine amide" evidence="3 6">
    <location>
        <position position="53"/>
    </location>
</feature>
<feature type="disulfide bond" evidence="2">
    <location>
        <begin position="47"/>
        <end position="53"/>
    </location>
</feature>
<proteinExistence type="evidence at transcript level"/>
<evidence type="ECO:0000250" key="1"/>
<evidence type="ECO:0000250" key="2">
    <source>
        <dbReference type="UniProtKB" id="A6MWS9"/>
    </source>
</evidence>
<evidence type="ECO:0000255" key="3"/>
<evidence type="ECO:0000269" key="4">
    <source>
    </source>
</evidence>
<evidence type="ECO:0000303" key="5">
    <source>
    </source>
</evidence>
<evidence type="ECO:0000305" key="6"/>
<evidence type="ECO:0000312" key="7">
    <source>
        <dbReference type="EMBL" id="ABQ88313.1"/>
    </source>
</evidence>
<keyword id="KW-0027">Amidation</keyword>
<keyword id="KW-0878">Amphibian defense peptide</keyword>
<keyword id="KW-0165">Cleavage on pair of basic residues</keyword>
<keyword id="KW-1015">Disulfide bond</keyword>
<keyword id="KW-0964">Secreted</keyword>
<keyword id="KW-0732">Signal</keyword>